<proteinExistence type="evidence at protein level"/>
<organism>
    <name type="scientific">Chlamydomonas reinhardtii</name>
    <name type="common">Chlamydomonas smithii</name>
    <dbReference type="NCBI Taxonomy" id="3055"/>
    <lineage>
        <taxon>Eukaryota</taxon>
        <taxon>Viridiplantae</taxon>
        <taxon>Chlorophyta</taxon>
        <taxon>core chlorophytes</taxon>
        <taxon>Chlorophyceae</taxon>
        <taxon>CS clade</taxon>
        <taxon>Chlamydomonadales</taxon>
        <taxon>Chlamydomonadaceae</taxon>
        <taxon>Chlamydomonas</taxon>
    </lineage>
</organism>
<dbReference type="EMBL" id="DS496109">
    <property type="protein sequence ID" value="EDP08857.1"/>
    <property type="molecule type" value="Genomic_DNA"/>
</dbReference>
<dbReference type="RefSeq" id="XP_001693603.1">
    <property type="nucleotide sequence ID" value="XM_001693551.1"/>
</dbReference>
<dbReference type="SMR" id="A8HUA1"/>
<dbReference type="PaxDb" id="3055-EDP08857"/>
<dbReference type="eggNOG" id="ENOG502QPV7">
    <property type="taxonomic scope" value="Eukaryota"/>
</dbReference>
<dbReference type="HOGENOM" id="CLU_006364_0_0_1"/>
<dbReference type="GO" id="GO:0005930">
    <property type="term" value="C:axoneme"/>
    <property type="evidence" value="ECO:0000314"/>
    <property type="project" value="GeneDB"/>
</dbReference>
<dbReference type="GO" id="GO:0005737">
    <property type="term" value="C:cytoplasm"/>
    <property type="evidence" value="ECO:0000314"/>
    <property type="project" value="GeneDB"/>
</dbReference>
<dbReference type="GO" id="GO:0031514">
    <property type="term" value="C:motile cilium"/>
    <property type="evidence" value="ECO:0007669"/>
    <property type="project" value="UniProtKB-SubCell"/>
</dbReference>
<dbReference type="GO" id="GO:0060285">
    <property type="term" value="P:cilium-dependent cell motility"/>
    <property type="evidence" value="ECO:0000315"/>
    <property type="project" value="GeneDB"/>
</dbReference>
<dbReference type="InterPro" id="IPR049270">
    <property type="entry name" value="CFAP58_CC"/>
</dbReference>
<dbReference type="PANTHER" id="PTHR32083:SF0">
    <property type="entry name" value="CILIA AND FLAGELLA-ASSOCIATED PROTEIN 58"/>
    <property type="match status" value="1"/>
</dbReference>
<dbReference type="PANTHER" id="PTHR32083">
    <property type="entry name" value="CILIA AND FLAGELLA-ASSOCIATED PROTEIN 58-RELATED"/>
    <property type="match status" value="1"/>
</dbReference>
<dbReference type="Pfam" id="PF21771">
    <property type="entry name" value="CFAP58_CC"/>
    <property type="match status" value="1"/>
</dbReference>
<protein>
    <recommendedName>
        <fullName evidence="5">Cilia- and flagella-associated protein 58</fullName>
    </recommendedName>
    <alternativeName>
        <fullName evidence="5">Flagellum-associated protein 58</fullName>
    </alternativeName>
</protein>
<accession>A8HUA1</accession>
<comment type="subcellular location">
    <subcellularLocation>
        <location evidence="4">Cell projection</location>
        <location evidence="4">Cilium</location>
        <location evidence="4">Flagellum</location>
    </subcellularLocation>
</comment>
<comment type="similarity">
    <text evidence="5">Belongs to the CFAP58 family.</text>
</comment>
<reference key="1">
    <citation type="journal article" date="2007" name="Science">
        <title>The Chlamydomonas genome reveals the evolution of key animal and plant functions.</title>
        <authorList>
            <person name="Merchant S.S."/>
            <person name="Prochnik S.E."/>
            <person name="Vallon O."/>
            <person name="Harris E.H."/>
            <person name="Karpowicz S.J."/>
            <person name="Witman G.B."/>
            <person name="Terry A."/>
            <person name="Salamov A."/>
            <person name="Fritz-Laylin L.K."/>
            <person name="Marechal-Drouard L."/>
            <person name="Marshall W.F."/>
            <person name="Qu L.H."/>
            <person name="Nelson D.R."/>
            <person name="Sanderfoot A.A."/>
            <person name="Spalding M.H."/>
            <person name="Kapitonov V.V."/>
            <person name="Ren Q."/>
            <person name="Ferris P."/>
            <person name="Lindquist E."/>
            <person name="Shapiro H."/>
            <person name="Lucas S.M."/>
            <person name="Grimwood J."/>
            <person name="Schmutz J."/>
            <person name="Cardol P."/>
            <person name="Cerutti H."/>
            <person name="Chanfreau G."/>
            <person name="Chen C.L."/>
            <person name="Cognat V."/>
            <person name="Croft M.T."/>
            <person name="Dent R."/>
            <person name="Dutcher S."/>
            <person name="Fernandez E."/>
            <person name="Fukuzawa H."/>
            <person name="Gonzalez-Ballester D."/>
            <person name="Gonzalez-Halphen D."/>
            <person name="Hallmann A."/>
            <person name="Hanikenne M."/>
            <person name="Hippler M."/>
            <person name="Inwood W."/>
            <person name="Jabbari K."/>
            <person name="Kalanon M."/>
            <person name="Kuras R."/>
            <person name="Lefebvre P.A."/>
            <person name="Lemaire S.D."/>
            <person name="Lobanov A.V."/>
            <person name="Lohr M."/>
            <person name="Manuell A."/>
            <person name="Meier I."/>
            <person name="Mets L."/>
            <person name="Mittag M."/>
            <person name="Mittelmeier T."/>
            <person name="Moroney J.V."/>
            <person name="Moseley J."/>
            <person name="Napoli C."/>
            <person name="Nedelcu A.M."/>
            <person name="Niyogi K."/>
            <person name="Novoselov S.V."/>
            <person name="Paulsen I.T."/>
            <person name="Pazour G.J."/>
            <person name="Purton S."/>
            <person name="Ral J.P."/>
            <person name="Riano-Pachon D.M."/>
            <person name="Riekhof W."/>
            <person name="Rymarquis L."/>
            <person name="Schroda M."/>
            <person name="Stern D."/>
            <person name="Umen J."/>
            <person name="Willows R."/>
            <person name="Wilson N."/>
            <person name="Zimmer S.L."/>
            <person name="Allmer J."/>
            <person name="Balk J."/>
            <person name="Bisova K."/>
            <person name="Chen C.J."/>
            <person name="Elias M."/>
            <person name="Gendler K."/>
            <person name="Hauser C."/>
            <person name="Lamb M.R."/>
            <person name="Ledford H."/>
            <person name="Long J.C."/>
            <person name="Minagawa J."/>
            <person name="Page M.D."/>
            <person name="Pan J."/>
            <person name="Pootakham W."/>
            <person name="Roje S."/>
            <person name="Rose A."/>
            <person name="Stahlberg E."/>
            <person name="Terauchi A.M."/>
            <person name="Yang P."/>
            <person name="Ball S."/>
            <person name="Bowler C."/>
            <person name="Dieckmann C.L."/>
            <person name="Gladyshev V.N."/>
            <person name="Green P."/>
            <person name="Jorgensen R."/>
            <person name="Mayfield S."/>
            <person name="Mueller-Roeber B."/>
            <person name="Rajamani S."/>
            <person name="Sayre R.T."/>
            <person name="Brokstein P."/>
            <person name="Dubchak I."/>
            <person name="Goodstein D."/>
            <person name="Hornick L."/>
            <person name="Huang Y.W."/>
            <person name="Jhaveri J."/>
            <person name="Luo Y."/>
            <person name="Martinez D."/>
            <person name="Ngau W.C."/>
            <person name="Otillar B."/>
            <person name="Poliakov A."/>
            <person name="Porter A."/>
            <person name="Szajkowski L."/>
            <person name="Werner G."/>
            <person name="Zhou K."/>
            <person name="Grigoriev I.V."/>
            <person name="Rokhsar D.S."/>
            <person name="Grossman A.R."/>
        </authorList>
    </citation>
    <scope>NUCLEOTIDE SEQUENCE [LARGE SCALE GENOMIC DNA]</scope>
    <source>
        <strain>CC-503</strain>
    </source>
</reference>
<reference key="2">
    <citation type="journal article" date="2005" name="J. Cell Biol.">
        <title>Proteomic analysis of a eukaryotic cilium.</title>
        <authorList>
            <person name="Pazour G.J."/>
            <person name="Agrin N."/>
            <person name="Leszyk J."/>
            <person name="Witman G.B."/>
        </authorList>
    </citation>
    <scope>IDENTIFICATION BY MASS SPECTROMETRY</scope>
    <scope>SUBCELLULAR LOCATION</scope>
</reference>
<name>CFA58_CHLRE</name>
<feature type="chain" id="PRO_0000432112" description="Cilia- and flagella-associated protein 58">
    <location>
        <begin position="1"/>
        <end position="863"/>
    </location>
</feature>
<feature type="region of interest" description="Disordered" evidence="3">
    <location>
        <begin position="836"/>
        <end position="863"/>
    </location>
</feature>
<feature type="coiled-coil region" evidence="2">
    <location>
        <begin position="107"/>
        <end position="600"/>
    </location>
</feature>
<feature type="coiled-coil region" evidence="2">
    <location>
        <begin position="631"/>
        <end position="815"/>
    </location>
</feature>
<feature type="compositionally biased region" description="Gly residues" evidence="3">
    <location>
        <begin position="845"/>
        <end position="863"/>
    </location>
</feature>
<evidence type="ECO:0000250" key="1">
    <source>
        <dbReference type="UniProtKB" id="Q5T655"/>
    </source>
</evidence>
<evidence type="ECO:0000255" key="2"/>
<evidence type="ECO:0000256" key="3">
    <source>
        <dbReference type="SAM" id="MobiDB-lite"/>
    </source>
</evidence>
<evidence type="ECO:0000269" key="4">
    <source>
    </source>
</evidence>
<evidence type="ECO:0000305" key="5"/>
<evidence type="ECO:0000312" key="6">
    <source>
        <dbReference type="EMBL" id="EDP08857.1"/>
    </source>
</evidence>
<sequence length="863" mass="100797">MASDFSTGLHGGHHETLEQYNKVLEELAADAVMDPFRVEYEKLHRALRKTYESQARLAKKCQELNSDISLNASKVQSALKLNEEDRETAVALKREINKAWKMVDDSTVKETKAKETAQQLKVEIANLSRLVEEGAGLAIGEETALNELLKQKEELARERDAQVEQLMKYRSDLMETQEKLRAADAEKLQLDADIQHLRGTINDKKAEAEREIRKKERMEKEMKELRQQLEIRSSEIKSKQLQVTSTEEQVARLEQMLRDAKFATEKVQKEYNMLNERMQKLHHDLEEQIHTNTQLLTENSAKQVELRVKEEEISGIKQEASRVNKLREQTVKKTKQLEEQRVEVEKERDVLRAELAALERELEAKQKEVDVEKKKLEELTRERDAENATQKQIDLVKINENAKRNLEQEIQGYKMEAQKQSKLIYQLEKEREKYDLEAAEAANKYQQAQSEVKLRVDAIMDLQRRIAEGESKLKQQQNLYEAVRADRNLYSKNLIEAQDEIQEMKRKFKIMQHQIEQLKEEITGKDLYLLKEHFEHQKVINEKEQLRNELDRSKSNIKEADSAINAQKVEIDKLNHIINEADQERRRQKKEYDIVVNERDILGTQLVRRNDELAALYERIKIQQATLQMGQSQYRDRLAEIRQLKVRLADLKRQLHLLKSSVSNIDVLKREVHQLGRELLQERTKVKALSEELENPLNVHRWRKLEGSDPGTYEMIQKIQTLQKRLISKTEEVVEKDLLIQEKEKLYMELKNILARQPGPEVAEQLSIYQANLREKTKQMKAMASELNMYQAQVNEYKYEIERLVRELNEMKQVFFDRRKKEQADRARTMKASMYGPSLLDQLPGGSGTGSGGMATGGGVGMS</sequence>
<gene>
    <name evidence="1" type="primary">CFAP58</name>
    <name evidence="6" type="synonym">FAP58</name>
    <name evidence="6" type="ORF">CHLREDRAFT_206234</name>
</gene>
<keyword id="KW-0966">Cell projection</keyword>
<keyword id="KW-0969">Cilium</keyword>
<keyword id="KW-0175">Coiled coil</keyword>
<keyword id="KW-0282">Flagellum</keyword>